<organism>
    <name type="scientific">Capra hircus</name>
    <name type="common">Goat</name>
    <dbReference type="NCBI Taxonomy" id="9925"/>
    <lineage>
        <taxon>Eukaryota</taxon>
        <taxon>Metazoa</taxon>
        <taxon>Chordata</taxon>
        <taxon>Craniata</taxon>
        <taxon>Vertebrata</taxon>
        <taxon>Euteleostomi</taxon>
        <taxon>Mammalia</taxon>
        <taxon>Eutheria</taxon>
        <taxon>Laurasiatheria</taxon>
        <taxon>Artiodactyla</taxon>
        <taxon>Ruminantia</taxon>
        <taxon>Pecora</taxon>
        <taxon>Bovidae</taxon>
        <taxon>Caprinae</taxon>
        <taxon>Capra</taxon>
    </lineage>
</organism>
<evidence type="ECO:0000305" key="1"/>
<reference key="1">
    <citation type="submission" date="2003-12" db="EMBL/GenBank/DDBJ databases">
        <authorList>
            <person name="Yin J."/>
            <person name="Li J.Q."/>
            <person name="Zhou H.M."/>
        </authorList>
    </citation>
    <scope>NUCLEOTIDE SEQUENCE [MRNA]</scope>
</reference>
<gene>
    <name type="primary">KRTAP11-1</name>
</gene>
<comment type="function">
    <text>In the wool cortex, wool keratin intermediate filaments are embedded in an interfilamentous matrix, consisting of wool keratin-associated proteins (KRTAP), which are essential for the formation of a rigid and resistant wool shaft through their extensive disulfide bond cross-linking with abundant cysteine residues of wool keratins. The matrix proteins include the high-sulfur and high-glycine-tyrosine keratins.</text>
</comment>
<comment type="tissue specificity">
    <text>Wool.</text>
</comment>
<comment type="similarity">
    <text evidence="1">Belongs to the PMG family.</text>
</comment>
<keyword id="KW-0416">Keratin</keyword>
<keyword id="KW-1185">Reference proteome</keyword>
<keyword id="KW-0677">Repeat</keyword>
<dbReference type="EMBL" id="AY510113">
    <property type="protein sequence ID" value="AAS00520.1"/>
    <property type="molecule type" value="mRNA"/>
</dbReference>
<dbReference type="RefSeq" id="NP_001272696.1">
    <property type="nucleotide sequence ID" value="NM_001285767.1"/>
</dbReference>
<dbReference type="STRING" id="9925.ENSCHIP00000001409"/>
<dbReference type="Ensembl" id="ENSCHIT00000004008.1">
    <property type="protein sequence ID" value="ENSCHIP00000001409.1"/>
    <property type="gene ID" value="ENSCHIG00000002902.1"/>
</dbReference>
<dbReference type="Ensembl" id="ENSCHIT00020006514">
    <property type="protein sequence ID" value="ENSCHIP00020005082"/>
    <property type="gene ID" value="ENSCHIG00020003062"/>
</dbReference>
<dbReference type="Ensembl" id="ENSCHIT00040000304">
    <property type="protein sequence ID" value="ENSCHIP00040000265"/>
    <property type="gene ID" value="ENSCHIG00040000162"/>
</dbReference>
<dbReference type="GeneID" id="100861173"/>
<dbReference type="KEGG" id="chx:100861173"/>
<dbReference type="CTD" id="337880"/>
<dbReference type="GeneTree" id="ENSGT00730000111463"/>
<dbReference type="OMA" id="CQPVGGI"/>
<dbReference type="OrthoDB" id="9444590at2759"/>
<dbReference type="Proteomes" id="UP000291000">
    <property type="component" value="Chromosome 1"/>
</dbReference>
<dbReference type="Proteomes" id="UP000694566">
    <property type="component" value="Unplaced"/>
</dbReference>
<dbReference type="Bgee" id="ENSCHIG00000002902">
    <property type="expression patterns" value="Expressed in skin of neck and 9 other cell types or tissues"/>
</dbReference>
<dbReference type="GO" id="GO:0005829">
    <property type="term" value="C:cytosol"/>
    <property type="evidence" value="ECO:0007669"/>
    <property type="project" value="UniProtKB-ARBA"/>
</dbReference>
<dbReference type="GO" id="GO:0045095">
    <property type="term" value="C:keratin filament"/>
    <property type="evidence" value="ECO:0007669"/>
    <property type="project" value="InterPro"/>
</dbReference>
<dbReference type="GO" id="GO:0005198">
    <property type="term" value="F:structural molecule activity"/>
    <property type="evidence" value="ECO:0007669"/>
    <property type="project" value="InterPro"/>
</dbReference>
<dbReference type="InterPro" id="IPR007659">
    <property type="entry name" value="Keratin_matx"/>
</dbReference>
<dbReference type="InterPro" id="IPR007951">
    <property type="entry name" value="KRTAP_PMG"/>
</dbReference>
<dbReference type="PANTHER" id="PTHR23260">
    <property type="entry name" value="KERATIN ASSOCIATED PROTEIN 3-3-RELATED"/>
    <property type="match status" value="1"/>
</dbReference>
<dbReference type="PANTHER" id="PTHR23260:SF9">
    <property type="entry name" value="KERATIN-ASSOCIATED PROTEIN 11-1"/>
    <property type="match status" value="1"/>
</dbReference>
<dbReference type="Pfam" id="PF05287">
    <property type="entry name" value="PMG"/>
    <property type="match status" value="1"/>
</dbReference>
<proteinExistence type="evidence at transcript level"/>
<feature type="chain" id="PRO_0000185195" description="Keratin-associated protein 11-1">
    <location>
        <begin position="1"/>
        <end position="159"/>
    </location>
</feature>
<feature type="repeat" description="1">
    <location>
        <begin position="107"/>
        <end position="116"/>
    </location>
</feature>
<feature type="repeat" description="2">
    <location>
        <begin position="117"/>
        <end position="126"/>
    </location>
</feature>
<feature type="repeat" description="3">
    <location>
        <begin position="127"/>
        <end position="136"/>
    </location>
</feature>
<feature type="repeat" description="4">
    <location>
        <begin position="137"/>
        <end position="146"/>
    </location>
</feature>
<feature type="region of interest" description="4 X 10 AA approximate repeats">
    <location>
        <begin position="107"/>
        <end position="146"/>
    </location>
</feature>
<protein>
    <recommendedName>
        <fullName>Keratin-associated protein 11-1</fullName>
    </recommendedName>
    <alternativeName>
        <fullName>High sulfur keratin-associated protein 11.1</fullName>
    </alternativeName>
</protein>
<accession>Q6R648</accession>
<name>KR111_CAPHI</name>
<sequence length="159" mass="16843">MSYSCSTRNCSSRRIGGEYAVPVVTVSSPEADCLSGIYLPSSFQTGSWLLDHCQETCCEPTVCQSTCYQPTPCVSSPVQVTSRQTTCVSSPCSTTCSRPLTFISSGCQPLSGVSTVCKPVRSISTVCQPVGGVSTICQPTCGVSRTYQQSCVSSCRRIC</sequence>